<sequence>MAILQSFLLLLSLPFLFTLIYTKKMKESKRNLPPGPAKLPIVGNLHQLQGMVHRCLHELSKKHGPVMHLQLGFVPLVLISSSEAAEEALKTHDIECCTRPNTNAARVFSRNNKNIGLGAYSDEWRELRKVAVREYFSVKKVQSFRYVREEENHLMVKKLRDLALKQSPVDLSKTLFCLAASTVFRPVFGQSFSDNKHFSEEKIEELVFEAQKSLTFKFSDLFPIPGLGWFIGFVSGQHKGLHKVFIEVDNFLNHMIDDHQKQNQPQDRSDIVGSLLDMIHNQEQDKSFKLTIDHLKGITQDIFLAGIDTSAITMIWAMAELVNNPRVMKKVQDEIRSCIGIKKERIEEEDVGKLQYLKLVIKETLRLHPAAPLLLPRETMADIKIQGYDIPRKTLLLVSAWSLGRDPKYWKNPEEFNPERFIDCPVDYKGHSFEFLPFGSGRRFCPGMASAIATIELTLLNLLYFFDWKLPEEMKDMNMEESGDVTIVKKVPLELLPVLYH</sequence>
<name>C71BP_ARATH</name>
<organism>
    <name type="scientific">Arabidopsis thaliana</name>
    <name type="common">Mouse-ear cress</name>
    <dbReference type="NCBI Taxonomy" id="3702"/>
    <lineage>
        <taxon>Eukaryota</taxon>
        <taxon>Viridiplantae</taxon>
        <taxon>Streptophyta</taxon>
        <taxon>Embryophyta</taxon>
        <taxon>Tracheophyta</taxon>
        <taxon>Spermatophyta</taxon>
        <taxon>Magnoliopsida</taxon>
        <taxon>eudicotyledons</taxon>
        <taxon>Gunneridae</taxon>
        <taxon>Pentapetalae</taxon>
        <taxon>rosids</taxon>
        <taxon>malvids</taxon>
        <taxon>Brassicales</taxon>
        <taxon>Brassicaceae</taxon>
        <taxon>Camelineae</taxon>
        <taxon>Arabidopsis</taxon>
    </lineage>
</organism>
<gene>
    <name type="primary">CYP71B25</name>
    <name type="ordered locus">At3g26270</name>
    <name type="ORF">MTC11.20</name>
</gene>
<protein>
    <recommendedName>
        <fullName>Cytochrome P450 71B25</fullName>
        <ecNumber>1.14.-.-</ecNumber>
    </recommendedName>
</protein>
<reference key="1">
    <citation type="journal article" date="2000" name="DNA Res.">
        <title>Structural analysis of Arabidopsis thaliana chromosome 3. I. Sequence features of the regions of 4,504,864 bp covered by sixty P1 and TAC clones.</title>
        <authorList>
            <person name="Sato S."/>
            <person name="Nakamura Y."/>
            <person name="Kaneko T."/>
            <person name="Katoh T."/>
            <person name="Asamizu E."/>
            <person name="Tabata S."/>
        </authorList>
    </citation>
    <scope>NUCLEOTIDE SEQUENCE [LARGE SCALE GENOMIC DNA]</scope>
    <source>
        <strain>cv. Columbia</strain>
    </source>
</reference>
<reference key="2">
    <citation type="journal article" date="2017" name="Plant J.">
        <title>Araport11: a complete reannotation of the Arabidopsis thaliana reference genome.</title>
        <authorList>
            <person name="Cheng C.Y."/>
            <person name="Krishnakumar V."/>
            <person name="Chan A.P."/>
            <person name="Thibaud-Nissen F."/>
            <person name="Schobel S."/>
            <person name="Town C.D."/>
        </authorList>
    </citation>
    <scope>GENOME REANNOTATION</scope>
    <source>
        <strain>cv. Columbia</strain>
    </source>
</reference>
<reference key="3">
    <citation type="journal article" date="2006" name="Plant Biotechnol. J.">
        <title>Simultaneous high-throughput recombinational cloning of open reading frames in closed and open configurations.</title>
        <authorList>
            <person name="Underwood B.A."/>
            <person name="Vanderhaeghen R."/>
            <person name="Whitford R."/>
            <person name="Town C.D."/>
            <person name="Hilson P."/>
        </authorList>
    </citation>
    <scope>NUCLEOTIDE SEQUENCE [LARGE SCALE MRNA]</scope>
    <source>
        <strain>cv. Columbia</strain>
    </source>
</reference>
<feature type="chain" id="PRO_0000052102" description="Cytochrome P450 71B25">
    <location>
        <begin position="1"/>
        <end position="501"/>
    </location>
</feature>
<feature type="transmembrane region" description="Helical" evidence="2">
    <location>
        <begin position="1"/>
        <end position="21"/>
    </location>
</feature>
<feature type="binding site" description="axial binding residue" evidence="1">
    <location>
        <position position="445"/>
    </location>
    <ligand>
        <name>heme</name>
        <dbReference type="ChEBI" id="CHEBI:30413"/>
    </ligand>
    <ligandPart>
        <name>Fe</name>
        <dbReference type="ChEBI" id="CHEBI:18248"/>
    </ligandPart>
</feature>
<accession>Q9LTL2</accession>
<accession>Q1PEL4</accession>
<dbReference type="EC" id="1.14.-.-"/>
<dbReference type="EMBL" id="AB024038">
    <property type="protein sequence ID" value="BAB02450.1"/>
    <property type="molecule type" value="Genomic_DNA"/>
</dbReference>
<dbReference type="EMBL" id="CP002686">
    <property type="protein sequence ID" value="AEE77140.1"/>
    <property type="molecule type" value="Genomic_DNA"/>
</dbReference>
<dbReference type="EMBL" id="DQ446703">
    <property type="protein sequence ID" value="ABE65971.1"/>
    <property type="molecule type" value="mRNA"/>
</dbReference>
<dbReference type="RefSeq" id="NP_189258.1">
    <property type="nucleotide sequence ID" value="NM_113534.1"/>
</dbReference>
<dbReference type="SMR" id="Q9LTL2"/>
<dbReference type="FunCoup" id="Q9LTL2">
    <property type="interactions" value="224"/>
</dbReference>
<dbReference type="STRING" id="3702.Q9LTL2"/>
<dbReference type="PaxDb" id="3702-AT3G26270.1"/>
<dbReference type="EnsemblPlants" id="AT3G26270.1">
    <property type="protein sequence ID" value="AT3G26270.1"/>
    <property type="gene ID" value="AT3G26270"/>
</dbReference>
<dbReference type="GeneID" id="822230"/>
<dbReference type="Gramene" id="AT3G26270.1">
    <property type="protein sequence ID" value="AT3G26270.1"/>
    <property type="gene ID" value="AT3G26270"/>
</dbReference>
<dbReference type="KEGG" id="ath:AT3G26270"/>
<dbReference type="Araport" id="AT3G26270"/>
<dbReference type="TAIR" id="AT3G26270">
    <property type="gene designation" value="CYP71B25"/>
</dbReference>
<dbReference type="eggNOG" id="KOG0156">
    <property type="taxonomic scope" value="Eukaryota"/>
</dbReference>
<dbReference type="HOGENOM" id="CLU_001570_4_1_1"/>
<dbReference type="InParanoid" id="Q9LTL2"/>
<dbReference type="OMA" id="RFINCPV"/>
<dbReference type="PhylomeDB" id="Q9LTL2"/>
<dbReference type="BioCyc" id="ARA:AT3G26270-MONOMER"/>
<dbReference type="PRO" id="PR:Q9LTL2"/>
<dbReference type="Proteomes" id="UP000006548">
    <property type="component" value="Chromosome 3"/>
</dbReference>
<dbReference type="ExpressionAtlas" id="Q9LTL2">
    <property type="expression patterns" value="baseline and differential"/>
</dbReference>
<dbReference type="GO" id="GO:0016020">
    <property type="term" value="C:membrane"/>
    <property type="evidence" value="ECO:0007669"/>
    <property type="project" value="UniProtKB-SubCell"/>
</dbReference>
<dbReference type="GO" id="GO:0020037">
    <property type="term" value="F:heme binding"/>
    <property type="evidence" value="ECO:0007669"/>
    <property type="project" value="InterPro"/>
</dbReference>
<dbReference type="GO" id="GO:0005506">
    <property type="term" value="F:iron ion binding"/>
    <property type="evidence" value="ECO:0007669"/>
    <property type="project" value="InterPro"/>
</dbReference>
<dbReference type="GO" id="GO:0004497">
    <property type="term" value="F:monooxygenase activity"/>
    <property type="evidence" value="ECO:0007669"/>
    <property type="project" value="UniProtKB-KW"/>
</dbReference>
<dbReference type="GO" id="GO:0016705">
    <property type="term" value="F:oxidoreductase activity, acting on paired donors, with incorporation or reduction of molecular oxygen"/>
    <property type="evidence" value="ECO:0007669"/>
    <property type="project" value="InterPro"/>
</dbReference>
<dbReference type="CDD" id="cd11072">
    <property type="entry name" value="CYP71-like"/>
    <property type="match status" value="1"/>
</dbReference>
<dbReference type="FunFam" id="1.10.630.10:FF:000011">
    <property type="entry name" value="Cytochrome P450 83B1"/>
    <property type="match status" value="1"/>
</dbReference>
<dbReference type="Gene3D" id="1.10.630.10">
    <property type="entry name" value="Cytochrome P450"/>
    <property type="match status" value="1"/>
</dbReference>
<dbReference type="InterPro" id="IPR001128">
    <property type="entry name" value="Cyt_P450"/>
</dbReference>
<dbReference type="InterPro" id="IPR017972">
    <property type="entry name" value="Cyt_P450_CS"/>
</dbReference>
<dbReference type="InterPro" id="IPR002401">
    <property type="entry name" value="Cyt_P450_E_grp-I"/>
</dbReference>
<dbReference type="InterPro" id="IPR036396">
    <property type="entry name" value="Cyt_P450_sf"/>
</dbReference>
<dbReference type="InterPro" id="IPR050193">
    <property type="entry name" value="Cytochrome_P450_71"/>
</dbReference>
<dbReference type="PANTHER" id="PTHR47956">
    <property type="entry name" value="CYTOCHROME P450 71B11-RELATED"/>
    <property type="match status" value="1"/>
</dbReference>
<dbReference type="PANTHER" id="PTHR47956:SF5">
    <property type="entry name" value="CYTOCHROME P450 71B25-RELATED"/>
    <property type="match status" value="1"/>
</dbReference>
<dbReference type="Pfam" id="PF00067">
    <property type="entry name" value="p450"/>
    <property type="match status" value="1"/>
</dbReference>
<dbReference type="PRINTS" id="PR00463">
    <property type="entry name" value="EP450I"/>
</dbReference>
<dbReference type="PRINTS" id="PR00385">
    <property type="entry name" value="P450"/>
</dbReference>
<dbReference type="SUPFAM" id="SSF48264">
    <property type="entry name" value="Cytochrome P450"/>
    <property type="match status" value="1"/>
</dbReference>
<dbReference type="PROSITE" id="PS00086">
    <property type="entry name" value="CYTOCHROME_P450"/>
    <property type="match status" value="1"/>
</dbReference>
<proteinExistence type="evidence at transcript level"/>
<comment type="cofactor">
    <cofactor evidence="1">
        <name>heme</name>
        <dbReference type="ChEBI" id="CHEBI:30413"/>
    </cofactor>
</comment>
<comment type="subcellular location">
    <subcellularLocation>
        <location evidence="3">Membrane</location>
        <topology evidence="3">Single-pass membrane protein</topology>
    </subcellularLocation>
</comment>
<comment type="similarity">
    <text evidence="3">Belongs to the cytochrome P450 family.</text>
</comment>
<keyword id="KW-0349">Heme</keyword>
<keyword id="KW-0408">Iron</keyword>
<keyword id="KW-0472">Membrane</keyword>
<keyword id="KW-0479">Metal-binding</keyword>
<keyword id="KW-0503">Monooxygenase</keyword>
<keyword id="KW-0560">Oxidoreductase</keyword>
<keyword id="KW-1185">Reference proteome</keyword>
<keyword id="KW-0812">Transmembrane</keyword>
<keyword id="KW-1133">Transmembrane helix</keyword>
<evidence type="ECO:0000250" key="1"/>
<evidence type="ECO:0000255" key="2"/>
<evidence type="ECO:0000305" key="3"/>